<keyword id="KW-0285">Flavoprotein</keyword>
<keyword id="KW-0288">FMN</keyword>
<keyword id="KW-0520">NAD</keyword>
<keyword id="KW-0560">Oxidoreductase</keyword>
<keyword id="KW-1185">Reference proteome</keyword>
<reference key="1">
    <citation type="journal article" date="2005" name="Arch. Microbiol.">
        <title>The genome sequence of an anaerobic aromatic-degrading denitrifying bacterium, strain EbN1.</title>
        <authorList>
            <person name="Rabus R."/>
            <person name="Kube M."/>
            <person name="Heider J."/>
            <person name="Beck A."/>
            <person name="Heitmann K."/>
            <person name="Widdel F."/>
            <person name="Reinhardt R."/>
        </authorList>
    </citation>
    <scope>NUCLEOTIDE SEQUENCE [LARGE SCALE GENOMIC DNA]</scope>
    <source>
        <strain>DSM 19018 / LMG 30748 / EbN1</strain>
    </source>
</reference>
<evidence type="ECO:0000255" key="1">
    <source>
        <dbReference type="HAMAP-Rule" id="MF_01216"/>
    </source>
</evidence>
<organism>
    <name type="scientific">Aromatoleum aromaticum (strain DSM 19018 / LMG 30748 / EbN1)</name>
    <name type="common">Azoarcus sp. (strain EbN1)</name>
    <dbReference type="NCBI Taxonomy" id="76114"/>
    <lineage>
        <taxon>Bacteria</taxon>
        <taxon>Pseudomonadati</taxon>
        <taxon>Pseudomonadota</taxon>
        <taxon>Betaproteobacteria</taxon>
        <taxon>Rhodocyclales</taxon>
        <taxon>Rhodocyclaceae</taxon>
        <taxon>Aromatoleum</taxon>
    </lineage>
</organism>
<proteinExistence type="inferred from homology"/>
<feature type="chain" id="PRO_0000245872" description="FMN-dependent NADH:quinone oxidoreductase">
    <location>
        <begin position="1"/>
        <end position="199"/>
    </location>
</feature>
<feature type="binding site" evidence="1">
    <location>
        <position position="9"/>
    </location>
    <ligand>
        <name>FMN</name>
        <dbReference type="ChEBI" id="CHEBI:58210"/>
    </ligand>
</feature>
<feature type="binding site" evidence="1">
    <location>
        <begin position="15"/>
        <end position="17"/>
    </location>
    <ligand>
        <name>FMN</name>
        <dbReference type="ChEBI" id="CHEBI:58210"/>
    </ligand>
</feature>
<feature type="binding site" evidence="1">
    <location>
        <begin position="95"/>
        <end position="98"/>
    </location>
    <ligand>
        <name>FMN</name>
        <dbReference type="ChEBI" id="CHEBI:58210"/>
    </ligand>
</feature>
<dbReference type="EC" id="1.6.5.-" evidence="1"/>
<dbReference type="EC" id="1.7.1.17" evidence="1"/>
<dbReference type="EMBL" id="CR555306">
    <property type="protein sequence ID" value="CAI08325.1"/>
    <property type="molecule type" value="Genomic_DNA"/>
</dbReference>
<dbReference type="RefSeq" id="WP_011238013.1">
    <property type="nucleotide sequence ID" value="NC_006513.1"/>
</dbReference>
<dbReference type="SMR" id="Q5P2Y9"/>
<dbReference type="STRING" id="76114.ebA3879"/>
<dbReference type="KEGG" id="eba:ebA3879"/>
<dbReference type="eggNOG" id="COG1182">
    <property type="taxonomic scope" value="Bacteria"/>
</dbReference>
<dbReference type="HOGENOM" id="CLU_088964_0_0_4"/>
<dbReference type="OrthoDB" id="9787136at2"/>
<dbReference type="Proteomes" id="UP000006552">
    <property type="component" value="Chromosome"/>
</dbReference>
<dbReference type="GO" id="GO:0009055">
    <property type="term" value="F:electron transfer activity"/>
    <property type="evidence" value="ECO:0007669"/>
    <property type="project" value="UniProtKB-UniRule"/>
</dbReference>
<dbReference type="GO" id="GO:0010181">
    <property type="term" value="F:FMN binding"/>
    <property type="evidence" value="ECO:0007669"/>
    <property type="project" value="UniProtKB-UniRule"/>
</dbReference>
<dbReference type="GO" id="GO:0016652">
    <property type="term" value="F:oxidoreductase activity, acting on NAD(P)H as acceptor"/>
    <property type="evidence" value="ECO:0007669"/>
    <property type="project" value="UniProtKB-UniRule"/>
</dbReference>
<dbReference type="GO" id="GO:0016655">
    <property type="term" value="F:oxidoreductase activity, acting on NAD(P)H, quinone or similar compound as acceptor"/>
    <property type="evidence" value="ECO:0007669"/>
    <property type="project" value="InterPro"/>
</dbReference>
<dbReference type="Gene3D" id="3.40.50.360">
    <property type="match status" value="1"/>
</dbReference>
<dbReference type="HAMAP" id="MF_01216">
    <property type="entry name" value="Azoreductase_type1"/>
    <property type="match status" value="1"/>
</dbReference>
<dbReference type="InterPro" id="IPR003680">
    <property type="entry name" value="Flavodoxin_fold"/>
</dbReference>
<dbReference type="InterPro" id="IPR029039">
    <property type="entry name" value="Flavoprotein-like_sf"/>
</dbReference>
<dbReference type="InterPro" id="IPR050104">
    <property type="entry name" value="FMN-dep_NADH:Q_OxRdtase_AzoR1"/>
</dbReference>
<dbReference type="InterPro" id="IPR023048">
    <property type="entry name" value="NADH:quinone_OxRdtase_FMN_depd"/>
</dbReference>
<dbReference type="PANTHER" id="PTHR43741">
    <property type="entry name" value="FMN-DEPENDENT NADH-AZOREDUCTASE 1"/>
    <property type="match status" value="1"/>
</dbReference>
<dbReference type="PANTHER" id="PTHR43741:SF2">
    <property type="entry name" value="FMN-DEPENDENT NADH:QUINONE OXIDOREDUCTASE"/>
    <property type="match status" value="1"/>
</dbReference>
<dbReference type="Pfam" id="PF02525">
    <property type="entry name" value="Flavodoxin_2"/>
    <property type="match status" value="1"/>
</dbReference>
<dbReference type="SUPFAM" id="SSF52218">
    <property type="entry name" value="Flavoproteins"/>
    <property type="match status" value="1"/>
</dbReference>
<name>AZOR_AROAE</name>
<gene>
    <name evidence="1" type="primary">azoR</name>
    <name type="ordered locus">AZOSEA22000</name>
    <name type="ORF">ebA3879</name>
</gene>
<accession>Q5P2Y9</accession>
<protein>
    <recommendedName>
        <fullName evidence="1">FMN-dependent NADH:quinone oxidoreductase</fullName>
        <ecNumber evidence="1">1.6.5.-</ecNumber>
    </recommendedName>
    <alternativeName>
        <fullName evidence="1">Azo-dye reductase</fullName>
    </alternativeName>
    <alternativeName>
        <fullName evidence="1">FMN-dependent NADH-azo compound oxidoreductase</fullName>
    </alternativeName>
    <alternativeName>
        <fullName evidence="1">FMN-dependent NADH-azoreductase</fullName>
        <ecNumber evidence="1">1.7.1.17</ecNumber>
    </alternativeName>
</protein>
<sequence length="199" mass="21427">MNILQINSSARSDASNSTRVANSIVERLRASHPGAAVVVRSLAQNPHPVLDEAALGALFTPADKRTPEQTARVALDDVLIAEIQAADAVVIGVPMYNFGVPVQLKNWIDAITRVKVTFRYTANGPEGLLKDKKVYVAFARGGRYRDTPADTQVPYLKTIFGFLGMTDVHFVFAEGLAMGADAAEQAFAEAERDIEAALA</sequence>
<comment type="function">
    <text evidence="1">Quinone reductase that provides resistance to thiol-specific stress caused by electrophilic quinones.</text>
</comment>
<comment type="function">
    <text evidence="1">Also exhibits azoreductase activity. Catalyzes the reductive cleavage of the azo bond in aromatic azo compounds to the corresponding amines.</text>
</comment>
<comment type="catalytic activity">
    <reaction evidence="1">
        <text>2 a quinone + NADH + H(+) = 2 a 1,4-benzosemiquinone + NAD(+)</text>
        <dbReference type="Rhea" id="RHEA:65952"/>
        <dbReference type="ChEBI" id="CHEBI:15378"/>
        <dbReference type="ChEBI" id="CHEBI:57540"/>
        <dbReference type="ChEBI" id="CHEBI:57945"/>
        <dbReference type="ChEBI" id="CHEBI:132124"/>
        <dbReference type="ChEBI" id="CHEBI:134225"/>
    </reaction>
</comment>
<comment type="catalytic activity">
    <reaction evidence="1">
        <text>N,N-dimethyl-1,4-phenylenediamine + anthranilate + 2 NAD(+) = 2-(4-dimethylaminophenyl)diazenylbenzoate + 2 NADH + 2 H(+)</text>
        <dbReference type="Rhea" id="RHEA:55872"/>
        <dbReference type="ChEBI" id="CHEBI:15378"/>
        <dbReference type="ChEBI" id="CHEBI:15783"/>
        <dbReference type="ChEBI" id="CHEBI:16567"/>
        <dbReference type="ChEBI" id="CHEBI:57540"/>
        <dbReference type="ChEBI" id="CHEBI:57945"/>
        <dbReference type="ChEBI" id="CHEBI:71579"/>
        <dbReference type="EC" id="1.7.1.17"/>
    </reaction>
</comment>
<comment type="cofactor">
    <cofactor evidence="1">
        <name>FMN</name>
        <dbReference type="ChEBI" id="CHEBI:58210"/>
    </cofactor>
    <text evidence="1">Binds 1 FMN per subunit.</text>
</comment>
<comment type="subunit">
    <text evidence="1">Homodimer.</text>
</comment>
<comment type="similarity">
    <text evidence="1">Belongs to the azoreductase type 1 family.</text>
</comment>